<feature type="chain" id="PRO_1000083105" description="Leucyl/phenylalanyl-tRNA--protein transferase">
    <location>
        <begin position="1"/>
        <end position="248"/>
    </location>
</feature>
<protein>
    <recommendedName>
        <fullName evidence="1">Leucyl/phenylalanyl-tRNA--protein transferase</fullName>
        <ecNumber evidence="1">2.3.2.6</ecNumber>
    </recommendedName>
    <alternativeName>
        <fullName evidence="1">L/F-transferase</fullName>
    </alternativeName>
    <alternativeName>
        <fullName evidence="1">Leucyltransferase</fullName>
    </alternativeName>
    <alternativeName>
        <fullName evidence="1">Phenyalanyltransferase</fullName>
    </alternativeName>
</protein>
<name>LFTR_RHIWR</name>
<sequence length="248" mass="26351">MKAIDPDLLLRAYSIGVFPMADSRAADDVYWVEPKKRGILPLDHFRLSRSLAKTIRSDRFAVTADRAFGEVVAECAAVTSQRPDTWINPAIEAAYADLHRRGHAHSIECWREGRLVGGLYGVRLGGAFFGESMFSRESNASKVALAWLVARLRAGGFRLLDCQFITDHLQSLGAIEVSRDDYVALLDVALGVVAGAGAAGGVAVAGAAAGWSAPDFFALDGGATDPDTRTVSGPISGCTIVQLLGQTS</sequence>
<gene>
    <name evidence="1" type="primary">aat</name>
    <name type="ordered locus">Swit_2552</name>
</gene>
<keyword id="KW-0012">Acyltransferase</keyword>
<keyword id="KW-0963">Cytoplasm</keyword>
<keyword id="KW-1185">Reference proteome</keyword>
<keyword id="KW-0808">Transferase</keyword>
<dbReference type="EC" id="2.3.2.6" evidence="1"/>
<dbReference type="EMBL" id="CP000699">
    <property type="protein sequence ID" value="ABQ68911.1"/>
    <property type="molecule type" value="Genomic_DNA"/>
</dbReference>
<dbReference type="SMR" id="A5V9E5"/>
<dbReference type="STRING" id="392499.Swit_2552"/>
<dbReference type="PaxDb" id="392499-Swit_2552"/>
<dbReference type="KEGG" id="swi:Swit_2552"/>
<dbReference type="eggNOG" id="COG2360">
    <property type="taxonomic scope" value="Bacteria"/>
</dbReference>
<dbReference type="HOGENOM" id="CLU_075045_1_0_5"/>
<dbReference type="OrthoDB" id="9790282at2"/>
<dbReference type="Proteomes" id="UP000001989">
    <property type="component" value="Chromosome"/>
</dbReference>
<dbReference type="GO" id="GO:0005737">
    <property type="term" value="C:cytoplasm"/>
    <property type="evidence" value="ECO:0007669"/>
    <property type="project" value="UniProtKB-SubCell"/>
</dbReference>
<dbReference type="GO" id="GO:0008914">
    <property type="term" value="F:leucyl-tRNA--protein transferase activity"/>
    <property type="evidence" value="ECO:0007669"/>
    <property type="project" value="UniProtKB-UniRule"/>
</dbReference>
<dbReference type="GO" id="GO:0030163">
    <property type="term" value="P:protein catabolic process"/>
    <property type="evidence" value="ECO:0007669"/>
    <property type="project" value="UniProtKB-UniRule"/>
</dbReference>
<dbReference type="FunFam" id="3.40.630.70:FF:000001">
    <property type="entry name" value="Leucyl/phenylalanyl-tRNA--protein transferase"/>
    <property type="match status" value="1"/>
</dbReference>
<dbReference type="Gene3D" id="3.40.630.70">
    <property type="entry name" value="Leucyl/phenylalanyl-tRNA-protein transferase, C-terminal domain"/>
    <property type="match status" value="1"/>
</dbReference>
<dbReference type="HAMAP" id="MF_00688">
    <property type="entry name" value="Leu_Phe_trans"/>
    <property type="match status" value="1"/>
</dbReference>
<dbReference type="InterPro" id="IPR016181">
    <property type="entry name" value="Acyl_CoA_acyltransferase"/>
</dbReference>
<dbReference type="InterPro" id="IPR004616">
    <property type="entry name" value="Leu/Phe-tRNA_Trfase"/>
</dbReference>
<dbReference type="InterPro" id="IPR042203">
    <property type="entry name" value="Leu/Phe-tRNA_Trfase_C"/>
</dbReference>
<dbReference type="NCBIfam" id="TIGR00667">
    <property type="entry name" value="aat"/>
    <property type="match status" value="1"/>
</dbReference>
<dbReference type="PANTHER" id="PTHR30098">
    <property type="entry name" value="LEUCYL/PHENYLALANYL-TRNA--PROTEIN TRANSFERASE"/>
    <property type="match status" value="1"/>
</dbReference>
<dbReference type="PANTHER" id="PTHR30098:SF2">
    <property type="entry name" value="LEUCYL_PHENYLALANYL-TRNA--PROTEIN TRANSFERASE"/>
    <property type="match status" value="1"/>
</dbReference>
<dbReference type="Pfam" id="PF03588">
    <property type="entry name" value="Leu_Phe_trans"/>
    <property type="match status" value="1"/>
</dbReference>
<dbReference type="SUPFAM" id="SSF55729">
    <property type="entry name" value="Acyl-CoA N-acyltransferases (Nat)"/>
    <property type="match status" value="1"/>
</dbReference>
<comment type="function">
    <text evidence="1">Functions in the N-end rule pathway of protein degradation where it conjugates Leu, Phe and, less efficiently, Met from aminoacyl-tRNAs to the N-termini of proteins containing an N-terminal arginine or lysine.</text>
</comment>
<comment type="catalytic activity">
    <reaction evidence="1">
        <text>N-terminal L-lysyl-[protein] + L-leucyl-tRNA(Leu) = N-terminal L-leucyl-L-lysyl-[protein] + tRNA(Leu) + H(+)</text>
        <dbReference type="Rhea" id="RHEA:12340"/>
        <dbReference type="Rhea" id="RHEA-COMP:9613"/>
        <dbReference type="Rhea" id="RHEA-COMP:9622"/>
        <dbReference type="Rhea" id="RHEA-COMP:12670"/>
        <dbReference type="Rhea" id="RHEA-COMP:12671"/>
        <dbReference type="ChEBI" id="CHEBI:15378"/>
        <dbReference type="ChEBI" id="CHEBI:65249"/>
        <dbReference type="ChEBI" id="CHEBI:78442"/>
        <dbReference type="ChEBI" id="CHEBI:78494"/>
        <dbReference type="ChEBI" id="CHEBI:133043"/>
        <dbReference type="EC" id="2.3.2.6"/>
    </reaction>
</comment>
<comment type="catalytic activity">
    <reaction evidence="1">
        <text>N-terminal L-arginyl-[protein] + L-leucyl-tRNA(Leu) = N-terminal L-leucyl-L-arginyl-[protein] + tRNA(Leu) + H(+)</text>
        <dbReference type="Rhea" id="RHEA:50416"/>
        <dbReference type="Rhea" id="RHEA-COMP:9613"/>
        <dbReference type="Rhea" id="RHEA-COMP:9622"/>
        <dbReference type="Rhea" id="RHEA-COMP:12672"/>
        <dbReference type="Rhea" id="RHEA-COMP:12673"/>
        <dbReference type="ChEBI" id="CHEBI:15378"/>
        <dbReference type="ChEBI" id="CHEBI:64719"/>
        <dbReference type="ChEBI" id="CHEBI:78442"/>
        <dbReference type="ChEBI" id="CHEBI:78494"/>
        <dbReference type="ChEBI" id="CHEBI:133044"/>
        <dbReference type="EC" id="2.3.2.6"/>
    </reaction>
</comment>
<comment type="catalytic activity">
    <reaction evidence="1">
        <text>L-phenylalanyl-tRNA(Phe) + an N-terminal L-alpha-aminoacyl-[protein] = an N-terminal L-phenylalanyl-L-alpha-aminoacyl-[protein] + tRNA(Phe)</text>
        <dbReference type="Rhea" id="RHEA:43632"/>
        <dbReference type="Rhea" id="RHEA-COMP:9668"/>
        <dbReference type="Rhea" id="RHEA-COMP:9699"/>
        <dbReference type="Rhea" id="RHEA-COMP:10636"/>
        <dbReference type="Rhea" id="RHEA-COMP:10637"/>
        <dbReference type="ChEBI" id="CHEBI:78442"/>
        <dbReference type="ChEBI" id="CHEBI:78531"/>
        <dbReference type="ChEBI" id="CHEBI:78597"/>
        <dbReference type="ChEBI" id="CHEBI:83561"/>
        <dbReference type="EC" id="2.3.2.6"/>
    </reaction>
</comment>
<comment type="subcellular location">
    <subcellularLocation>
        <location evidence="1">Cytoplasm</location>
    </subcellularLocation>
</comment>
<comment type="similarity">
    <text evidence="1">Belongs to the L/F-transferase family.</text>
</comment>
<accession>A5V9E5</accession>
<evidence type="ECO:0000255" key="1">
    <source>
        <dbReference type="HAMAP-Rule" id="MF_00688"/>
    </source>
</evidence>
<proteinExistence type="inferred from homology"/>
<organism>
    <name type="scientific">Rhizorhabdus wittichii (strain DSM 6014 / CCUG 31198 / JCM 15750 / NBRC 105917 / EY 4224 / RW1)</name>
    <name type="common">Sphingomonas wittichii</name>
    <dbReference type="NCBI Taxonomy" id="392499"/>
    <lineage>
        <taxon>Bacteria</taxon>
        <taxon>Pseudomonadati</taxon>
        <taxon>Pseudomonadota</taxon>
        <taxon>Alphaproteobacteria</taxon>
        <taxon>Sphingomonadales</taxon>
        <taxon>Sphingomonadaceae</taxon>
        <taxon>Rhizorhabdus</taxon>
    </lineage>
</organism>
<reference key="1">
    <citation type="journal article" date="2010" name="J. Bacteriol.">
        <title>Genome sequence of the dioxin-mineralizing bacterium Sphingomonas wittichii RW1.</title>
        <authorList>
            <person name="Miller T.R."/>
            <person name="Delcher A.L."/>
            <person name="Salzberg S.L."/>
            <person name="Saunders E."/>
            <person name="Detter J.C."/>
            <person name="Halden R.U."/>
        </authorList>
    </citation>
    <scope>NUCLEOTIDE SEQUENCE [LARGE SCALE GENOMIC DNA]</scope>
    <source>
        <strain>DSM 6014 / CCUG 31198 / JCM 15750 / NBRC 105917 / EY 4224 / RW1</strain>
    </source>
</reference>